<name>RECR_BURMA</name>
<organism>
    <name type="scientific">Burkholderia mallei (strain ATCC 23344)</name>
    <dbReference type="NCBI Taxonomy" id="243160"/>
    <lineage>
        <taxon>Bacteria</taxon>
        <taxon>Pseudomonadati</taxon>
        <taxon>Pseudomonadota</taxon>
        <taxon>Betaproteobacteria</taxon>
        <taxon>Burkholderiales</taxon>
        <taxon>Burkholderiaceae</taxon>
        <taxon>Burkholderia</taxon>
        <taxon>pseudomallei group</taxon>
    </lineage>
</organism>
<dbReference type="EMBL" id="CP000010">
    <property type="protein sequence ID" value="AAU47587.1"/>
    <property type="molecule type" value="Genomic_DNA"/>
</dbReference>
<dbReference type="RefSeq" id="WP_004193537.1">
    <property type="nucleotide sequence ID" value="NC_006348.1"/>
</dbReference>
<dbReference type="RefSeq" id="YP_103019.1">
    <property type="nucleotide sequence ID" value="NC_006348.1"/>
</dbReference>
<dbReference type="SMR" id="Q62JV0"/>
<dbReference type="GeneID" id="93060489"/>
<dbReference type="KEGG" id="bma:BMA1359"/>
<dbReference type="PATRIC" id="fig|243160.12.peg.1399"/>
<dbReference type="eggNOG" id="COG0353">
    <property type="taxonomic scope" value="Bacteria"/>
</dbReference>
<dbReference type="HOGENOM" id="CLU_060739_1_2_4"/>
<dbReference type="Proteomes" id="UP000006693">
    <property type="component" value="Chromosome 1"/>
</dbReference>
<dbReference type="GO" id="GO:0003677">
    <property type="term" value="F:DNA binding"/>
    <property type="evidence" value="ECO:0007669"/>
    <property type="project" value="UniProtKB-UniRule"/>
</dbReference>
<dbReference type="GO" id="GO:0008270">
    <property type="term" value="F:zinc ion binding"/>
    <property type="evidence" value="ECO:0007669"/>
    <property type="project" value="UniProtKB-KW"/>
</dbReference>
<dbReference type="GO" id="GO:0006310">
    <property type="term" value="P:DNA recombination"/>
    <property type="evidence" value="ECO:0007669"/>
    <property type="project" value="UniProtKB-UniRule"/>
</dbReference>
<dbReference type="GO" id="GO:0006281">
    <property type="term" value="P:DNA repair"/>
    <property type="evidence" value="ECO:0007669"/>
    <property type="project" value="UniProtKB-UniRule"/>
</dbReference>
<dbReference type="CDD" id="cd01025">
    <property type="entry name" value="TOPRIM_recR"/>
    <property type="match status" value="1"/>
</dbReference>
<dbReference type="Gene3D" id="3.40.1360.10">
    <property type="match status" value="1"/>
</dbReference>
<dbReference type="Gene3D" id="6.10.250.240">
    <property type="match status" value="1"/>
</dbReference>
<dbReference type="Gene3D" id="1.10.8.420">
    <property type="entry name" value="RecR Domain 1"/>
    <property type="match status" value="1"/>
</dbReference>
<dbReference type="HAMAP" id="MF_00017">
    <property type="entry name" value="RecR"/>
    <property type="match status" value="1"/>
</dbReference>
<dbReference type="InterPro" id="IPR000093">
    <property type="entry name" value="DNA_Rcmb_RecR"/>
</dbReference>
<dbReference type="InterPro" id="IPR023627">
    <property type="entry name" value="Rcmb_RecR"/>
</dbReference>
<dbReference type="InterPro" id="IPR015967">
    <property type="entry name" value="Rcmb_RecR_Znf"/>
</dbReference>
<dbReference type="InterPro" id="IPR006171">
    <property type="entry name" value="TOPRIM_dom"/>
</dbReference>
<dbReference type="InterPro" id="IPR034137">
    <property type="entry name" value="TOPRIM_RecR"/>
</dbReference>
<dbReference type="NCBIfam" id="TIGR00615">
    <property type="entry name" value="recR"/>
    <property type="match status" value="1"/>
</dbReference>
<dbReference type="PANTHER" id="PTHR30446">
    <property type="entry name" value="RECOMBINATION PROTEIN RECR"/>
    <property type="match status" value="1"/>
</dbReference>
<dbReference type="PANTHER" id="PTHR30446:SF0">
    <property type="entry name" value="RECOMBINATION PROTEIN RECR"/>
    <property type="match status" value="1"/>
</dbReference>
<dbReference type="Pfam" id="PF21175">
    <property type="entry name" value="RecR_C"/>
    <property type="match status" value="1"/>
</dbReference>
<dbReference type="Pfam" id="PF21176">
    <property type="entry name" value="RecR_HhH"/>
    <property type="match status" value="1"/>
</dbReference>
<dbReference type="Pfam" id="PF02132">
    <property type="entry name" value="RecR_ZnF"/>
    <property type="match status" value="1"/>
</dbReference>
<dbReference type="Pfam" id="PF13662">
    <property type="entry name" value="Toprim_4"/>
    <property type="match status" value="1"/>
</dbReference>
<dbReference type="SMART" id="SM00493">
    <property type="entry name" value="TOPRIM"/>
    <property type="match status" value="1"/>
</dbReference>
<dbReference type="SUPFAM" id="SSF111304">
    <property type="entry name" value="Recombination protein RecR"/>
    <property type="match status" value="1"/>
</dbReference>
<dbReference type="PROSITE" id="PS01300">
    <property type="entry name" value="RECR"/>
    <property type="match status" value="1"/>
</dbReference>
<dbReference type="PROSITE" id="PS50880">
    <property type="entry name" value="TOPRIM"/>
    <property type="match status" value="1"/>
</dbReference>
<accession>Q62JV0</accession>
<gene>
    <name evidence="1" type="primary">recR</name>
    <name type="ordered locus">BMA1359</name>
</gene>
<comment type="function">
    <text evidence="1">May play a role in DNA repair. It seems to be involved in an RecBC-independent recombinational process of DNA repair. It may act with RecF and RecO.</text>
</comment>
<comment type="similarity">
    <text evidence="1">Belongs to the RecR family.</text>
</comment>
<feature type="chain" id="PRO_0000190296" description="Recombination protein RecR">
    <location>
        <begin position="1"/>
        <end position="200"/>
    </location>
</feature>
<feature type="domain" description="Toprim" evidence="1">
    <location>
        <begin position="82"/>
        <end position="177"/>
    </location>
</feature>
<feature type="zinc finger region" description="C4-type" evidence="1">
    <location>
        <begin position="59"/>
        <end position="74"/>
    </location>
</feature>
<protein>
    <recommendedName>
        <fullName evidence="1">Recombination protein RecR</fullName>
    </recommendedName>
</protein>
<reference key="1">
    <citation type="journal article" date="2004" name="Proc. Natl. Acad. Sci. U.S.A.">
        <title>Structural flexibility in the Burkholderia mallei genome.</title>
        <authorList>
            <person name="Nierman W.C."/>
            <person name="DeShazer D."/>
            <person name="Kim H.S."/>
            <person name="Tettelin H."/>
            <person name="Nelson K.E."/>
            <person name="Feldblyum T.V."/>
            <person name="Ulrich R.L."/>
            <person name="Ronning C.M."/>
            <person name="Brinkac L.M."/>
            <person name="Daugherty S.C."/>
            <person name="Davidsen T.D."/>
            <person name="DeBoy R.T."/>
            <person name="Dimitrov G."/>
            <person name="Dodson R.J."/>
            <person name="Durkin A.S."/>
            <person name="Gwinn M.L."/>
            <person name="Haft D.H."/>
            <person name="Khouri H.M."/>
            <person name="Kolonay J.F."/>
            <person name="Madupu R."/>
            <person name="Mohammoud Y."/>
            <person name="Nelson W.C."/>
            <person name="Radune D."/>
            <person name="Romero C.M."/>
            <person name="Sarria S."/>
            <person name="Selengut J."/>
            <person name="Shamblin C."/>
            <person name="Sullivan S.A."/>
            <person name="White O."/>
            <person name="Yu Y."/>
            <person name="Zafar N."/>
            <person name="Zhou L."/>
            <person name="Fraser C.M."/>
        </authorList>
    </citation>
    <scope>NUCLEOTIDE SEQUENCE [LARGE SCALE GENOMIC DNA]</scope>
    <source>
        <strain>ATCC 23344</strain>
    </source>
</reference>
<sequence>MSIKPPSALSELVEALRALPGVGPKSAQRIAYHLMQHDREGAERLGRSLLFATEHLRHCEKCNTFTEAQICEVCSDPERDPALLCVVETPADQIMLEQTMTYRGLYFVLMGRLSPLDGIGPKEIHFDRLVRRASDGIVKEVVLATNFTNEGEATAHYLGQTLKARGLAVTRLARGVPVGGELEYVDAGTIARAMLDRRTL</sequence>
<proteinExistence type="inferred from homology"/>
<evidence type="ECO:0000255" key="1">
    <source>
        <dbReference type="HAMAP-Rule" id="MF_00017"/>
    </source>
</evidence>
<keyword id="KW-0227">DNA damage</keyword>
<keyword id="KW-0233">DNA recombination</keyword>
<keyword id="KW-0234">DNA repair</keyword>
<keyword id="KW-0479">Metal-binding</keyword>
<keyword id="KW-1185">Reference proteome</keyword>
<keyword id="KW-0862">Zinc</keyword>
<keyword id="KW-0863">Zinc-finger</keyword>